<evidence type="ECO:0000305" key="1"/>
<sequence>MNKLEKEASVFFKKNQESVSQDFKKKVSSIEMFSTSLNSEENQSLDRLFLSETQNLSDEESYQEDVLSVKLLTSQIKAIQKQHVLLLGEKIYNARKILSKSCFSSTTFSSWLDLVFRTKSSAYNALAYYELFISLPSTTLQKEFQSIPYKSAYILAARKGDLKTKVSVIGKVCGMSNASAIRVMDQLLPSSRSKDNQRFFESDLEKNRQLSDLLVELLRIVCSGVFLSPYNENLLQQLFEVYKQKS</sequence>
<proteinExistence type="inferred from homology"/>
<dbReference type="EMBL" id="X78726">
    <property type="protein sequence ID" value="CAA55379.1"/>
    <property type="molecule type" value="Genomic_DNA"/>
</dbReference>
<dbReference type="EMBL" id="AE002162">
    <property type="protein sequence ID" value="AAF39716.1"/>
    <property type="molecule type" value="Genomic_DNA"/>
</dbReference>
<dbReference type="PIR" id="S44166">
    <property type="entry name" value="S44166"/>
</dbReference>
<dbReference type="RefSeq" id="WP_010231991.1">
    <property type="nucleotide sequence ID" value="NZ_ACOV01000005.1"/>
</dbReference>
<dbReference type="GeneID" id="1245523"/>
<dbReference type="KEGG" id="cmu:TC_A07"/>
<dbReference type="PATRIC" id="fig|243161.6.peg.9"/>
<dbReference type="HOGENOM" id="CLU_098562_0_0_0"/>
<dbReference type="OrthoDB" id="19089at2"/>
<dbReference type="Proteomes" id="UP000000800">
    <property type="component" value="Plasmid pMoPn"/>
</dbReference>
<dbReference type="InterPro" id="IPR005350">
    <property type="entry name" value="UPF0137"/>
</dbReference>
<dbReference type="Pfam" id="PF03677">
    <property type="entry name" value="UPF0137"/>
    <property type="match status" value="1"/>
</dbReference>
<comment type="similarity">
    <text evidence="1">Belongs to the UPF0137 (pGP6-D) family.</text>
</comment>
<name>GP6D_CHLMU</name>
<feature type="chain" id="PRO_0000220774" description="Virulence plasmid protein pGP6-D">
    <location>
        <begin position="1"/>
        <end position="246"/>
    </location>
</feature>
<geneLocation type="plasmid">
    <name>pMoPn</name>
</geneLocation>
<reference key="1">
    <citation type="journal article" date="1997" name="Microbiology">
        <title>Plasmid diversity in Chlamydia.</title>
        <authorList>
            <person name="Thomas N.S."/>
            <person name="Lusher M."/>
            <person name="Storey C.C."/>
            <person name="Clarke I.N."/>
        </authorList>
    </citation>
    <scope>NUCLEOTIDE SEQUENCE [GENOMIC DNA]</scope>
    <source>
        <strain>MoPn / Nigg</strain>
    </source>
</reference>
<reference key="2">
    <citation type="journal article" date="2000" name="Nucleic Acids Res.">
        <title>Genome sequences of Chlamydia trachomatis MoPn and Chlamydia pneumoniae AR39.</title>
        <authorList>
            <person name="Read T.D."/>
            <person name="Brunham R.C."/>
            <person name="Shen C."/>
            <person name="Gill S.R."/>
            <person name="Heidelberg J.F."/>
            <person name="White O."/>
            <person name="Hickey E.K."/>
            <person name="Peterson J.D."/>
            <person name="Utterback T.R."/>
            <person name="Berry K.J."/>
            <person name="Bass S."/>
            <person name="Linher K.D."/>
            <person name="Weidman J.F."/>
            <person name="Khouri H.M."/>
            <person name="Craven B."/>
            <person name="Bowman C."/>
            <person name="Dodson R.J."/>
            <person name="Gwinn M.L."/>
            <person name="Nelson W.C."/>
            <person name="DeBoy R.T."/>
            <person name="Kolonay J.F."/>
            <person name="McClarty G."/>
            <person name="Salzberg S.L."/>
            <person name="Eisen J.A."/>
            <person name="Fraser C.M."/>
        </authorList>
    </citation>
    <scope>NUCLEOTIDE SEQUENCE [LARGE SCALE GENOMIC DNA]</scope>
    <source>
        <strain>MoPn / Nigg</strain>
    </source>
</reference>
<keyword id="KW-0614">Plasmid</keyword>
<gene>
    <name type="ordered locus">TC_A07</name>
</gene>
<protein>
    <recommendedName>
        <fullName>Virulence plasmid protein pGP6-D</fullName>
    </recommendedName>
</protein>
<accession>Q46442</accession>
<organism>
    <name type="scientific">Chlamydia muridarum (strain MoPn / Nigg)</name>
    <dbReference type="NCBI Taxonomy" id="243161"/>
    <lineage>
        <taxon>Bacteria</taxon>
        <taxon>Pseudomonadati</taxon>
        <taxon>Chlamydiota</taxon>
        <taxon>Chlamydiia</taxon>
        <taxon>Chlamydiales</taxon>
        <taxon>Chlamydiaceae</taxon>
        <taxon>Chlamydia/Chlamydophila group</taxon>
        <taxon>Chlamydia</taxon>
    </lineage>
</organism>